<comment type="function">
    <text evidence="1">Catalyzes carboxymethyl transfer from carboxy-S-adenosyl-L-methionine (Cx-SAM) to 5-hydroxyuridine (ho5U) to form 5-carboxymethoxyuridine (cmo5U) at position 34 in tRNAs.</text>
</comment>
<comment type="catalytic activity">
    <reaction evidence="1">
        <text>carboxy-S-adenosyl-L-methionine + 5-hydroxyuridine(34) in tRNA = 5-carboxymethoxyuridine(34) in tRNA + S-adenosyl-L-homocysteine + H(+)</text>
        <dbReference type="Rhea" id="RHEA:52848"/>
        <dbReference type="Rhea" id="RHEA-COMP:13381"/>
        <dbReference type="Rhea" id="RHEA-COMP:13383"/>
        <dbReference type="ChEBI" id="CHEBI:15378"/>
        <dbReference type="ChEBI" id="CHEBI:57856"/>
        <dbReference type="ChEBI" id="CHEBI:134278"/>
        <dbReference type="ChEBI" id="CHEBI:136877"/>
        <dbReference type="ChEBI" id="CHEBI:136879"/>
    </reaction>
</comment>
<comment type="subunit">
    <text evidence="1">Homotetramer.</text>
</comment>
<comment type="similarity">
    <text evidence="1">Belongs to the class I-like SAM-binding methyltransferase superfamily. CmoB family.</text>
</comment>
<sequence>MIEFGNFYQLIAKNHLSHWLETLPAQIAAWQREQQHGLFKQWSNAVEFLPEITPWRLDLLHSVTAESETPLSEGQLKRIDTLLRNLMPWRKGPFSLYGVDIDTEWRSDWKWDRVLPHLSDLTGRTILDVGCGSGYHLWRMIGAGAHLAVGIDPTQLFLCQFEAVRKLLGNDQRAHLLPLGIEQLPALKAFDTVFSMGVLYHRRSPLEHLWQLKDQLVNEGELVLETLVVDGDENTVLVPGDRYAQMRNVYFIPSAPALKKWLEKCGFIDVRIADVCVTTTEEQRRTEWMVTESLADFLDPNDRSKTVEGYPAPQRAVLIARKP</sequence>
<protein>
    <recommendedName>
        <fullName evidence="1">tRNA U34 carboxymethyltransferase</fullName>
        <ecNumber evidence="1">2.5.1.-</ecNumber>
    </recommendedName>
</protein>
<name>CMOB_SALA4</name>
<gene>
    <name evidence="1" type="primary">cmoB</name>
    <name type="ordered locus">SeAg_B1217</name>
</gene>
<evidence type="ECO:0000255" key="1">
    <source>
        <dbReference type="HAMAP-Rule" id="MF_01590"/>
    </source>
</evidence>
<accession>B5F3I4</accession>
<proteinExistence type="inferred from homology"/>
<feature type="chain" id="PRO_1000201304" description="tRNA U34 carboxymethyltransferase">
    <location>
        <begin position="1"/>
        <end position="323"/>
    </location>
</feature>
<feature type="binding site" evidence="1">
    <location>
        <position position="91"/>
    </location>
    <ligand>
        <name>carboxy-S-adenosyl-L-methionine</name>
        <dbReference type="ChEBI" id="CHEBI:134278"/>
    </ligand>
</feature>
<feature type="binding site" evidence="1">
    <location>
        <position position="105"/>
    </location>
    <ligand>
        <name>carboxy-S-adenosyl-L-methionine</name>
        <dbReference type="ChEBI" id="CHEBI:134278"/>
    </ligand>
</feature>
<feature type="binding site" evidence="1">
    <location>
        <position position="110"/>
    </location>
    <ligand>
        <name>carboxy-S-adenosyl-L-methionine</name>
        <dbReference type="ChEBI" id="CHEBI:134278"/>
    </ligand>
</feature>
<feature type="binding site" evidence="1">
    <location>
        <position position="130"/>
    </location>
    <ligand>
        <name>carboxy-S-adenosyl-L-methionine</name>
        <dbReference type="ChEBI" id="CHEBI:134278"/>
    </ligand>
</feature>
<feature type="binding site" evidence="1">
    <location>
        <begin position="152"/>
        <end position="154"/>
    </location>
    <ligand>
        <name>carboxy-S-adenosyl-L-methionine</name>
        <dbReference type="ChEBI" id="CHEBI:134278"/>
    </ligand>
</feature>
<feature type="binding site" evidence="1">
    <location>
        <begin position="181"/>
        <end position="182"/>
    </location>
    <ligand>
        <name>carboxy-S-adenosyl-L-methionine</name>
        <dbReference type="ChEBI" id="CHEBI:134278"/>
    </ligand>
</feature>
<feature type="binding site" evidence="1">
    <location>
        <position position="196"/>
    </location>
    <ligand>
        <name>carboxy-S-adenosyl-L-methionine</name>
        <dbReference type="ChEBI" id="CHEBI:134278"/>
    </ligand>
</feature>
<feature type="binding site" evidence="1">
    <location>
        <position position="200"/>
    </location>
    <ligand>
        <name>carboxy-S-adenosyl-L-methionine</name>
        <dbReference type="ChEBI" id="CHEBI:134278"/>
    </ligand>
</feature>
<feature type="binding site" evidence="1">
    <location>
        <position position="315"/>
    </location>
    <ligand>
        <name>carboxy-S-adenosyl-L-methionine</name>
        <dbReference type="ChEBI" id="CHEBI:134278"/>
    </ligand>
</feature>
<organism>
    <name type="scientific">Salmonella agona (strain SL483)</name>
    <dbReference type="NCBI Taxonomy" id="454166"/>
    <lineage>
        <taxon>Bacteria</taxon>
        <taxon>Pseudomonadati</taxon>
        <taxon>Pseudomonadota</taxon>
        <taxon>Gammaproteobacteria</taxon>
        <taxon>Enterobacterales</taxon>
        <taxon>Enterobacteriaceae</taxon>
        <taxon>Salmonella</taxon>
    </lineage>
</organism>
<reference key="1">
    <citation type="journal article" date="2011" name="J. Bacteriol.">
        <title>Comparative genomics of 28 Salmonella enterica isolates: evidence for CRISPR-mediated adaptive sublineage evolution.</title>
        <authorList>
            <person name="Fricke W.F."/>
            <person name="Mammel M.K."/>
            <person name="McDermott P.F."/>
            <person name="Tartera C."/>
            <person name="White D.G."/>
            <person name="Leclerc J.E."/>
            <person name="Ravel J."/>
            <person name="Cebula T.A."/>
        </authorList>
    </citation>
    <scope>NUCLEOTIDE SEQUENCE [LARGE SCALE GENOMIC DNA]</scope>
    <source>
        <strain>SL483</strain>
    </source>
</reference>
<keyword id="KW-0808">Transferase</keyword>
<keyword id="KW-0819">tRNA processing</keyword>
<dbReference type="EC" id="2.5.1.-" evidence="1"/>
<dbReference type="EMBL" id="CP001138">
    <property type="protein sequence ID" value="ACH49365.1"/>
    <property type="molecule type" value="Genomic_DNA"/>
</dbReference>
<dbReference type="RefSeq" id="WP_000569026.1">
    <property type="nucleotide sequence ID" value="NC_011149.1"/>
</dbReference>
<dbReference type="SMR" id="B5F3I4"/>
<dbReference type="KEGG" id="sea:SeAg_B1217"/>
<dbReference type="HOGENOM" id="CLU_052665_0_0_6"/>
<dbReference type="Proteomes" id="UP000008819">
    <property type="component" value="Chromosome"/>
</dbReference>
<dbReference type="GO" id="GO:0008168">
    <property type="term" value="F:methyltransferase activity"/>
    <property type="evidence" value="ECO:0007669"/>
    <property type="project" value="TreeGrafter"/>
</dbReference>
<dbReference type="GO" id="GO:0016765">
    <property type="term" value="F:transferase activity, transferring alkyl or aryl (other than methyl) groups"/>
    <property type="evidence" value="ECO:0007669"/>
    <property type="project" value="UniProtKB-UniRule"/>
</dbReference>
<dbReference type="GO" id="GO:0002098">
    <property type="term" value="P:tRNA wobble uridine modification"/>
    <property type="evidence" value="ECO:0007669"/>
    <property type="project" value="InterPro"/>
</dbReference>
<dbReference type="CDD" id="cd02440">
    <property type="entry name" value="AdoMet_MTases"/>
    <property type="match status" value="1"/>
</dbReference>
<dbReference type="FunFam" id="3.40.50.150:FF:000080">
    <property type="entry name" value="tRNA U34 carboxymethyltransferase"/>
    <property type="match status" value="1"/>
</dbReference>
<dbReference type="Gene3D" id="3.40.50.150">
    <property type="entry name" value="Vaccinia Virus protein VP39"/>
    <property type="match status" value="1"/>
</dbReference>
<dbReference type="HAMAP" id="MF_01590">
    <property type="entry name" value="tRNA_carboxymethyltr_CmoB"/>
    <property type="match status" value="1"/>
</dbReference>
<dbReference type="InterPro" id="IPR010017">
    <property type="entry name" value="CmoB"/>
</dbReference>
<dbReference type="InterPro" id="IPR027555">
    <property type="entry name" value="Mo5U34_MeTrfas-like"/>
</dbReference>
<dbReference type="InterPro" id="IPR029063">
    <property type="entry name" value="SAM-dependent_MTases_sf"/>
</dbReference>
<dbReference type="NCBIfam" id="NF011650">
    <property type="entry name" value="PRK15068.1"/>
    <property type="match status" value="1"/>
</dbReference>
<dbReference type="NCBIfam" id="TIGR00452">
    <property type="entry name" value="tRNA 5-methoxyuridine(34)/uridine 5-oxyacetic acid(34) synthase CmoB"/>
    <property type="match status" value="1"/>
</dbReference>
<dbReference type="PANTHER" id="PTHR43464">
    <property type="entry name" value="METHYLTRANSFERASE"/>
    <property type="match status" value="1"/>
</dbReference>
<dbReference type="PANTHER" id="PTHR43464:SF95">
    <property type="entry name" value="TRNA U34 CARBOXYMETHYLTRANSFERASE"/>
    <property type="match status" value="1"/>
</dbReference>
<dbReference type="Pfam" id="PF08003">
    <property type="entry name" value="Methyltransf_9"/>
    <property type="match status" value="1"/>
</dbReference>
<dbReference type="SUPFAM" id="SSF53335">
    <property type="entry name" value="S-adenosyl-L-methionine-dependent methyltransferases"/>
    <property type="match status" value="1"/>
</dbReference>